<comment type="function">
    <text evidence="1">Produces ATP from ADP in the presence of a proton gradient across the membrane. The gamma chain is believed to be important in regulating ATPase activity and the flow of protons through the CF(0) complex.</text>
</comment>
<comment type="subunit">
    <text evidence="1">F-type ATPases have 2 components, CF(1) - the catalytic core - and CF(0) - the membrane proton channel. CF(1) has five subunits: alpha(3), beta(3), gamma(1), delta(1), epsilon(1). CF(0) has three main subunits: a, b and c.</text>
</comment>
<comment type="subcellular location">
    <subcellularLocation>
        <location evidence="1">Cell inner membrane</location>
        <topology evidence="1">Peripheral membrane protein</topology>
    </subcellularLocation>
</comment>
<comment type="similarity">
    <text evidence="1">Belongs to the ATPase gamma chain family.</text>
</comment>
<feature type="chain" id="PRO_1000053323" description="ATP synthase gamma chain">
    <location>
        <begin position="1"/>
        <end position="308"/>
    </location>
</feature>
<dbReference type="EMBL" id="CP000159">
    <property type="protein sequence ID" value="ABC44024.1"/>
    <property type="molecule type" value="Genomic_DNA"/>
</dbReference>
<dbReference type="RefSeq" id="WP_011403678.1">
    <property type="nucleotide sequence ID" value="NC_007677.1"/>
</dbReference>
<dbReference type="RefSeq" id="YP_445050.1">
    <property type="nucleotide sequence ID" value="NC_007677.1"/>
</dbReference>
<dbReference type="SMR" id="Q2S431"/>
<dbReference type="STRING" id="309807.SRU_0916"/>
<dbReference type="EnsemblBacteria" id="ABC44024">
    <property type="protein sequence ID" value="ABC44024"/>
    <property type="gene ID" value="SRU_0916"/>
</dbReference>
<dbReference type="KEGG" id="sru:SRU_0916"/>
<dbReference type="PATRIC" id="fig|309807.25.peg.950"/>
<dbReference type="eggNOG" id="COG0224">
    <property type="taxonomic scope" value="Bacteria"/>
</dbReference>
<dbReference type="HOGENOM" id="CLU_050669_0_1_10"/>
<dbReference type="OrthoDB" id="9812769at2"/>
<dbReference type="Proteomes" id="UP000008674">
    <property type="component" value="Chromosome"/>
</dbReference>
<dbReference type="GO" id="GO:0005886">
    <property type="term" value="C:plasma membrane"/>
    <property type="evidence" value="ECO:0007669"/>
    <property type="project" value="UniProtKB-SubCell"/>
</dbReference>
<dbReference type="GO" id="GO:0045259">
    <property type="term" value="C:proton-transporting ATP synthase complex"/>
    <property type="evidence" value="ECO:0007669"/>
    <property type="project" value="UniProtKB-KW"/>
</dbReference>
<dbReference type="GO" id="GO:0005524">
    <property type="term" value="F:ATP binding"/>
    <property type="evidence" value="ECO:0007669"/>
    <property type="project" value="UniProtKB-UniRule"/>
</dbReference>
<dbReference type="GO" id="GO:0046933">
    <property type="term" value="F:proton-transporting ATP synthase activity, rotational mechanism"/>
    <property type="evidence" value="ECO:0007669"/>
    <property type="project" value="UniProtKB-UniRule"/>
</dbReference>
<dbReference type="GO" id="GO:0042777">
    <property type="term" value="P:proton motive force-driven plasma membrane ATP synthesis"/>
    <property type="evidence" value="ECO:0007669"/>
    <property type="project" value="UniProtKB-UniRule"/>
</dbReference>
<dbReference type="CDD" id="cd12151">
    <property type="entry name" value="F1-ATPase_gamma"/>
    <property type="match status" value="1"/>
</dbReference>
<dbReference type="FunFam" id="1.10.287.80:FF:000003">
    <property type="entry name" value="ATP synthase gamma chain, chloroplastic"/>
    <property type="match status" value="1"/>
</dbReference>
<dbReference type="Gene3D" id="3.40.1380.10">
    <property type="match status" value="1"/>
</dbReference>
<dbReference type="Gene3D" id="1.10.287.80">
    <property type="entry name" value="ATP synthase, gamma subunit, helix hairpin domain"/>
    <property type="match status" value="1"/>
</dbReference>
<dbReference type="HAMAP" id="MF_00815">
    <property type="entry name" value="ATP_synth_gamma_bact"/>
    <property type="match status" value="1"/>
</dbReference>
<dbReference type="InterPro" id="IPR035968">
    <property type="entry name" value="ATP_synth_F1_ATPase_gsu"/>
</dbReference>
<dbReference type="InterPro" id="IPR000131">
    <property type="entry name" value="ATP_synth_F1_gsu"/>
</dbReference>
<dbReference type="InterPro" id="IPR023632">
    <property type="entry name" value="ATP_synth_F1_gsu_CS"/>
</dbReference>
<dbReference type="NCBIfam" id="TIGR01146">
    <property type="entry name" value="ATPsyn_F1gamma"/>
    <property type="match status" value="1"/>
</dbReference>
<dbReference type="PANTHER" id="PTHR11693">
    <property type="entry name" value="ATP SYNTHASE GAMMA CHAIN"/>
    <property type="match status" value="1"/>
</dbReference>
<dbReference type="PANTHER" id="PTHR11693:SF22">
    <property type="entry name" value="ATP SYNTHASE SUBUNIT GAMMA, MITOCHONDRIAL"/>
    <property type="match status" value="1"/>
</dbReference>
<dbReference type="Pfam" id="PF00231">
    <property type="entry name" value="ATP-synt"/>
    <property type="match status" value="1"/>
</dbReference>
<dbReference type="PRINTS" id="PR00126">
    <property type="entry name" value="ATPASEGAMMA"/>
</dbReference>
<dbReference type="SUPFAM" id="SSF52943">
    <property type="entry name" value="ATP synthase (F1-ATPase), gamma subunit"/>
    <property type="match status" value="1"/>
</dbReference>
<dbReference type="PROSITE" id="PS00153">
    <property type="entry name" value="ATPASE_GAMMA"/>
    <property type="match status" value="1"/>
</dbReference>
<keyword id="KW-0066">ATP synthesis</keyword>
<keyword id="KW-0997">Cell inner membrane</keyword>
<keyword id="KW-1003">Cell membrane</keyword>
<keyword id="KW-0139">CF(1)</keyword>
<keyword id="KW-0375">Hydrogen ion transport</keyword>
<keyword id="KW-0406">Ion transport</keyword>
<keyword id="KW-0472">Membrane</keyword>
<keyword id="KW-1185">Reference proteome</keyword>
<keyword id="KW-0813">Transport</keyword>
<evidence type="ECO:0000255" key="1">
    <source>
        <dbReference type="HAMAP-Rule" id="MF_00815"/>
    </source>
</evidence>
<name>ATPG_SALRD</name>
<sequence length="308" mass="34724">MANLRDIRNRIDSIENTKQVTRAMKMVAAAKLRRAQEKIFRARPYAYKIGELTNHLKQELDPTAHPFFQAPEEASGALVIVITADRGLCGSFNSDAINTAEHLIETTYAETQSADDLFMLCVGKKGHKHFQKRDYRLVGDYKGVFDGLNFDVAQQVVEDAVEGFERGIWGEVKLVYNEFKNTIVQNQIVEPLLPIPEERFETPVMEEEADGFALPENGRAIDYIFEPGAPTLLDELVPRYLYYQVWRALLESNAAEQGARMVAMDNATSNAEELIEDLTLEYNRARQSAITRELLDITSGAEALEESG</sequence>
<organism>
    <name type="scientific">Salinibacter ruber (strain DSM 13855 / M31)</name>
    <dbReference type="NCBI Taxonomy" id="309807"/>
    <lineage>
        <taxon>Bacteria</taxon>
        <taxon>Pseudomonadati</taxon>
        <taxon>Rhodothermota</taxon>
        <taxon>Rhodothermia</taxon>
        <taxon>Rhodothermales</taxon>
        <taxon>Salinibacteraceae</taxon>
        <taxon>Salinibacter</taxon>
    </lineage>
</organism>
<proteinExistence type="inferred from homology"/>
<protein>
    <recommendedName>
        <fullName evidence="1">ATP synthase gamma chain</fullName>
    </recommendedName>
    <alternativeName>
        <fullName evidence="1">ATP synthase F1 sector gamma subunit</fullName>
    </alternativeName>
    <alternativeName>
        <fullName evidence="1">F-ATPase gamma subunit</fullName>
    </alternativeName>
</protein>
<reference key="1">
    <citation type="journal article" date="2005" name="Proc. Natl. Acad. Sci. U.S.A.">
        <title>The genome of Salinibacter ruber: convergence and gene exchange among hyperhalophilic bacteria and archaea.</title>
        <authorList>
            <person name="Mongodin E.F."/>
            <person name="Nelson K.E."/>
            <person name="Daugherty S."/>
            <person name="DeBoy R.T."/>
            <person name="Wister J."/>
            <person name="Khouri H."/>
            <person name="Weidman J."/>
            <person name="Walsh D.A."/>
            <person name="Papke R.T."/>
            <person name="Sanchez Perez G."/>
            <person name="Sharma A.K."/>
            <person name="Nesbo C.L."/>
            <person name="MacLeod D."/>
            <person name="Bapteste E."/>
            <person name="Doolittle W.F."/>
            <person name="Charlebois R.L."/>
            <person name="Legault B."/>
            <person name="Rodriguez-Valera F."/>
        </authorList>
    </citation>
    <scope>NUCLEOTIDE SEQUENCE [LARGE SCALE GENOMIC DNA]</scope>
    <source>
        <strain>DSM 13855 / CECT 5946 / M31</strain>
    </source>
</reference>
<accession>Q2S431</accession>
<gene>
    <name evidence="1" type="primary">atpG</name>
    <name type="ordered locus">SRU_0916</name>
</gene>